<evidence type="ECO:0000250" key="1"/>
<evidence type="ECO:0000255" key="2">
    <source>
        <dbReference type="PROSITE-ProRule" id="PRU01081"/>
    </source>
</evidence>
<evidence type="ECO:0000256" key="3">
    <source>
        <dbReference type="SAM" id="MobiDB-lite"/>
    </source>
</evidence>
<evidence type="ECO:0000305" key="4"/>
<comment type="function">
    <text evidence="1">Aux/IAA proteins are short-lived transcriptional factors that function as repressors of early auxin response genes at low auxin concentrations. Repression is thought to result from the interaction with auxin response factors (ARFs), proteins that bind to the auxin-responsive promoter element (AuxRE). Formation of heterodimers with ARF proteins may alter their ability to modulate early auxin response genes expression (By similarity).</text>
</comment>
<comment type="subunit">
    <text evidence="1">Homodimers and heterodimers.</text>
</comment>
<comment type="subcellular location">
    <subcellularLocation>
        <location evidence="1">Nucleus</location>
    </subcellularLocation>
</comment>
<comment type="developmental stage">
    <text>Found in elongating hypocotyls.</text>
</comment>
<comment type="induction">
    <text>By auxin and cycloheximide.</text>
</comment>
<comment type="domain">
    <text evidence="1">The N-terminal half of the protein contains two conserved domains I and II. Domain I includes a slightly degenerated ERF-associated amphiphilic repression (EAR) motif which seems to be involved in the activity of transcriptional repression. Domain II is required for the correct degradation of the protein through the SCF-mediated ubiquitin-proteasome pathway. Interactions between Aux/IAA proteins and auxin response factors (ARFs) occur through their C-terminal dimerization domains III and IV (By similarity).</text>
</comment>
<comment type="similarity">
    <text evidence="4">Belongs to the Aux/IAA family.</text>
</comment>
<accession>P32294</accession>
<keyword id="KW-0927">Auxin signaling pathway</keyword>
<keyword id="KW-0539">Nucleus</keyword>
<keyword id="KW-1185">Reference proteome</keyword>
<keyword id="KW-0678">Repressor</keyword>
<keyword id="KW-0804">Transcription</keyword>
<keyword id="KW-0805">Transcription regulation</keyword>
<protein>
    <recommendedName>
        <fullName>Auxin-induced protein 22B</fullName>
    </recommendedName>
    <alternativeName>
        <fullName>Indole-3-acetic acid-induced protein ARG4</fullName>
    </alternativeName>
</protein>
<sequence length="196" mass="22050">MESRVVFESDLNLKATELRLGLPGTEEKEDNNLRTHAVLRNNKRQVRETSQDSVSISKASHHQQHVETVSAPPPKAKIVGWPPIRSYRKNSVQEGEGDGIFVKVSMDGAPYLRKVDLKVYGGYPELLKALETMFKLAIGEYSEREGYKGSEYAPTYEDKDGDWMLVGDVPWDMFVTSCKRLRIMKGSEARGLGCVV</sequence>
<reference key="1">
    <citation type="journal article" date="1992" name="Plant Cell Physiol.">
        <title>cDNA cloning of indole-3-acetic acid regulated genes: Aux22 and SAUR from mung bean (Vigna radiata) hypocotyl tissue.</title>
        <authorList>
            <person name="Yamamoto K.T."/>
            <person name="Mori H."/>
            <person name="Imaseki H."/>
        </authorList>
    </citation>
    <scope>NUCLEOTIDE SEQUENCE [MRNA]</scope>
    <source>
        <tissue>Hypocotyl</tissue>
    </source>
</reference>
<organism>
    <name type="scientific">Vigna radiata var. radiata</name>
    <name type="common">Mung bean</name>
    <name type="synonym">Phaseolus aureus</name>
    <dbReference type="NCBI Taxonomy" id="3916"/>
    <lineage>
        <taxon>Eukaryota</taxon>
        <taxon>Viridiplantae</taxon>
        <taxon>Streptophyta</taxon>
        <taxon>Embryophyta</taxon>
        <taxon>Tracheophyta</taxon>
        <taxon>Spermatophyta</taxon>
        <taxon>Magnoliopsida</taxon>
        <taxon>eudicotyledons</taxon>
        <taxon>Gunneridae</taxon>
        <taxon>Pentapetalae</taxon>
        <taxon>rosids</taxon>
        <taxon>fabids</taxon>
        <taxon>Fabales</taxon>
        <taxon>Fabaceae</taxon>
        <taxon>Papilionoideae</taxon>
        <taxon>50 kb inversion clade</taxon>
        <taxon>NPAAA clade</taxon>
        <taxon>indigoferoid/millettioid clade</taxon>
        <taxon>Phaseoleae</taxon>
        <taxon>Vigna</taxon>
    </lineage>
</organism>
<feature type="chain" id="PRO_0000112864" description="Auxin-induced protein 22B">
    <location>
        <begin position="1"/>
        <end position="196"/>
    </location>
</feature>
<feature type="domain" description="PB1" evidence="2">
    <location>
        <begin position="99"/>
        <end position="186"/>
    </location>
</feature>
<feature type="region of interest" description="Disordered" evidence="3">
    <location>
        <begin position="44"/>
        <end position="74"/>
    </location>
</feature>
<feature type="short sequence motif" description="EAR-like (transcriptional repression)">
    <location>
        <begin position="18"/>
        <end position="22"/>
    </location>
</feature>
<proteinExistence type="evidence at transcript level"/>
<dbReference type="EMBL" id="D14413">
    <property type="protein sequence ID" value="BAA03309.1"/>
    <property type="molecule type" value="mRNA"/>
</dbReference>
<dbReference type="PIR" id="T10941">
    <property type="entry name" value="T10941"/>
</dbReference>
<dbReference type="SMR" id="P32294"/>
<dbReference type="STRING" id="3916.P32294"/>
<dbReference type="Proteomes" id="UP000087766">
    <property type="component" value="Unplaced"/>
</dbReference>
<dbReference type="GO" id="GO:0005634">
    <property type="term" value="C:nucleus"/>
    <property type="evidence" value="ECO:0007669"/>
    <property type="project" value="UniProtKB-SubCell"/>
</dbReference>
<dbReference type="GO" id="GO:0009734">
    <property type="term" value="P:auxin-activated signaling pathway"/>
    <property type="evidence" value="ECO:0007669"/>
    <property type="project" value="UniProtKB-KW"/>
</dbReference>
<dbReference type="GO" id="GO:0006355">
    <property type="term" value="P:regulation of DNA-templated transcription"/>
    <property type="evidence" value="ECO:0007669"/>
    <property type="project" value="InterPro"/>
</dbReference>
<dbReference type="FunFam" id="3.10.20.90:FF:000078">
    <property type="entry name" value="Auxin-responsive protein"/>
    <property type="match status" value="1"/>
</dbReference>
<dbReference type="Gene3D" id="3.10.20.90">
    <property type="entry name" value="Phosphatidylinositol 3-kinase Catalytic Subunit, Chain A, domain 1"/>
    <property type="match status" value="1"/>
</dbReference>
<dbReference type="InterPro" id="IPR033389">
    <property type="entry name" value="AUX/IAA_dom"/>
</dbReference>
<dbReference type="InterPro" id="IPR003311">
    <property type="entry name" value="AUX_IAA"/>
</dbReference>
<dbReference type="InterPro" id="IPR053793">
    <property type="entry name" value="PB1-like"/>
</dbReference>
<dbReference type="PANTHER" id="PTHR31734">
    <property type="entry name" value="AUXIN-RESPONSIVE PROTEIN IAA17"/>
    <property type="match status" value="1"/>
</dbReference>
<dbReference type="PANTHER" id="PTHR31734:SF8">
    <property type="entry name" value="AUXIN-RESPONSIVE PROTEIN IAA24"/>
    <property type="match status" value="1"/>
</dbReference>
<dbReference type="Pfam" id="PF02309">
    <property type="entry name" value="AUX_IAA"/>
    <property type="match status" value="1"/>
</dbReference>
<dbReference type="SUPFAM" id="SSF54277">
    <property type="entry name" value="CAD &amp; PB1 domains"/>
    <property type="match status" value="1"/>
</dbReference>
<dbReference type="PROSITE" id="PS51745">
    <property type="entry name" value="PB1"/>
    <property type="match status" value="1"/>
</dbReference>
<gene>
    <name type="primary">AUX22B</name>
    <name type="synonym">ARG4</name>
</gene>
<name>AX22B_VIGRR</name>